<evidence type="ECO:0000255" key="1">
    <source>
        <dbReference type="HAMAP-Rule" id="MF_01804"/>
    </source>
</evidence>
<name>SCPB_STAA1</name>
<sequence length="180" mass="20206">MDNHGILESLLFTAGDEGLDEKQLLEILDMSKDQLVELIENYSSHGLMIQRFGTTYVLTTKKEAATYIEQLIEQKSQMKLSQAAMEVLSIIAYNQPLSRSDIELIRSINSDGAVKTLIAKGLVEAKVVNEQRSQQLITTDLFLNVFGISNIEDLPTTEEDDEEMDAFFSNLVNQKGENND</sequence>
<reference key="1">
    <citation type="journal article" date="2008" name="Antimicrob. Agents Chemother.">
        <title>Mutated response regulator graR is responsible for phenotypic conversion of Staphylococcus aureus from heterogeneous vancomycin-intermediate resistance to vancomycin-intermediate resistance.</title>
        <authorList>
            <person name="Neoh H.-M."/>
            <person name="Cui L."/>
            <person name="Yuzawa H."/>
            <person name="Takeuchi F."/>
            <person name="Matsuo M."/>
            <person name="Hiramatsu K."/>
        </authorList>
    </citation>
    <scope>NUCLEOTIDE SEQUENCE [LARGE SCALE GENOMIC DNA]</scope>
    <source>
        <strain>Mu3 / ATCC 700698</strain>
    </source>
</reference>
<protein>
    <recommendedName>
        <fullName evidence="1">Segregation and condensation protein B</fullName>
    </recommendedName>
</protein>
<comment type="function">
    <text evidence="1">Participates in chromosomal partition during cell division. May act via the formation of a condensin-like complex containing Smc and ScpA that pull DNA away from mid-cell into both cell halves.</text>
</comment>
<comment type="subunit">
    <text evidence="1">Homodimer. Homodimerization may be required to stabilize the binding of ScpA to the Smc head domains. Component of a cohesin-like complex composed of ScpA, ScpB and the Smc homodimer, in which ScpA and ScpB bind to the head domain of Smc. The presence of the three proteins is required for the association of the complex with DNA.</text>
</comment>
<comment type="subcellular location">
    <subcellularLocation>
        <location evidence="1">Cytoplasm</location>
    </subcellularLocation>
    <text evidence="1">Associated with two foci at the outer edges of the nucleoid region in young cells, and at four foci within both cell halves in older cells.</text>
</comment>
<comment type="similarity">
    <text evidence="1">Belongs to the ScpB family.</text>
</comment>
<gene>
    <name evidence="1" type="primary">scpB</name>
    <name type="ordered locus">SAHV_1482</name>
</gene>
<organism>
    <name type="scientific">Staphylococcus aureus (strain Mu3 / ATCC 700698)</name>
    <dbReference type="NCBI Taxonomy" id="418127"/>
    <lineage>
        <taxon>Bacteria</taxon>
        <taxon>Bacillati</taxon>
        <taxon>Bacillota</taxon>
        <taxon>Bacilli</taxon>
        <taxon>Bacillales</taxon>
        <taxon>Staphylococcaceae</taxon>
        <taxon>Staphylococcus</taxon>
    </lineage>
</organism>
<proteinExistence type="inferred from homology"/>
<feature type="chain" id="PRO_1000069961" description="Segregation and condensation protein B">
    <location>
        <begin position="1"/>
        <end position="180"/>
    </location>
</feature>
<keyword id="KW-0131">Cell cycle</keyword>
<keyword id="KW-0132">Cell division</keyword>
<keyword id="KW-0159">Chromosome partition</keyword>
<keyword id="KW-0963">Cytoplasm</keyword>
<accession>A7X2K7</accession>
<dbReference type="EMBL" id="AP009324">
    <property type="protein sequence ID" value="BAF78365.1"/>
    <property type="molecule type" value="Genomic_DNA"/>
</dbReference>
<dbReference type="RefSeq" id="WP_000368656.1">
    <property type="nucleotide sequence ID" value="NC_009782.1"/>
</dbReference>
<dbReference type="SMR" id="A7X2K7"/>
<dbReference type="KEGG" id="saw:SAHV_1482"/>
<dbReference type="HOGENOM" id="CLU_045647_5_3_9"/>
<dbReference type="GO" id="GO:0005737">
    <property type="term" value="C:cytoplasm"/>
    <property type="evidence" value="ECO:0007669"/>
    <property type="project" value="UniProtKB-SubCell"/>
</dbReference>
<dbReference type="GO" id="GO:0051301">
    <property type="term" value="P:cell division"/>
    <property type="evidence" value="ECO:0007669"/>
    <property type="project" value="UniProtKB-KW"/>
</dbReference>
<dbReference type="GO" id="GO:0051304">
    <property type="term" value="P:chromosome separation"/>
    <property type="evidence" value="ECO:0007669"/>
    <property type="project" value="InterPro"/>
</dbReference>
<dbReference type="GO" id="GO:0006260">
    <property type="term" value="P:DNA replication"/>
    <property type="evidence" value="ECO:0007669"/>
    <property type="project" value="UniProtKB-UniRule"/>
</dbReference>
<dbReference type="Gene3D" id="1.10.10.10">
    <property type="entry name" value="Winged helix-like DNA-binding domain superfamily/Winged helix DNA-binding domain"/>
    <property type="match status" value="2"/>
</dbReference>
<dbReference type="HAMAP" id="MF_01804">
    <property type="entry name" value="ScpB"/>
    <property type="match status" value="1"/>
</dbReference>
<dbReference type="InterPro" id="IPR005234">
    <property type="entry name" value="ScpB_csome_segregation"/>
</dbReference>
<dbReference type="InterPro" id="IPR036388">
    <property type="entry name" value="WH-like_DNA-bd_sf"/>
</dbReference>
<dbReference type="InterPro" id="IPR036390">
    <property type="entry name" value="WH_DNA-bd_sf"/>
</dbReference>
<dbReference type="NCBIfam" id="TIGR00281">
    <property type="entry name" value="SMC-Scp complex subunit ScpB"/>
    <property type="match status" value="1"/>
</dbReference>
<dbReference type="PANTHER" id="PTHR34298">
    <property type="entry name" value="SEGREGATION AND CONDENSATION PROTEIN B"/>
    <property type="match status" value="1"/>
</dbReference>
<dbReference type="PANTHER" id="PTHR34298:SF2">
    <property type="entry name" value="SEGREGATION AND CONDENSATION PROTEIN B"/>
    <property type="match status" value="1"/>
</dbReference>
<dbReference type="Pfam" id="PF04079">
    <property type="entry name" value="SMC_ScpB"/>
    <property type="match status" value="1"/>
</dbReference>
<dbReference type="PIRSF" id="PIRSF019345">
    <property type="entry name" value="ScpB"/>
    <property type="match status" value="1"/>
</dbReference>
<dbReference type="SUPFAM" id="SSF46785">
    <property type="entry name" value="Winged helix' DNA-binding domain"/>
    <property type="match status" value="2"/>
</dbReference>